<organism>
    <name type="scientific">Saccharophagus degradans (strain 2-40 / ATCC 43961 / DSM 17024)</name>
    <dbReference type="NCBI Taxonomy" id="203122"/>
    <lineage>
        <taxon>Bacteria</taxon>
        <taxon>Pseudomonadati</taxon>
        <taxon>Pseudomonadota</taxon>
        <taxon>Gammaproteobacteria</taxon>
        <taxon>Cellvibrionales</taxon>
        <taxon>Cellvibrionaceae</taxon>
        <taxon>Saccharophagus</taxon>
    </lineage>
</organism>
<feature type="chain" id="PRO_1000064764" description="Ribosome maturation factor RimP">
    <location>
        <begin position="1"/>
        <end position="151"/>
    </location>
</feature>
<protein>
    <recommendedName>
        <fullName evidence="1">Ribosome maturation factor RimP</fullName>
    </recommendedName>
</protein>
<evidence type="ECO:0000255" key="1">
    <source>
        <dbReference type="HAMAP-Rule" id="MF_01077"/>
    </source>
</evidence>
<dbReference type="EMBL" id="CP000282">
    <property type="protein sequence ID" value="ABD81970.1"/>
    <property type="molecule type" value="Genomic_DNA"/>
</dbReference>
<dbReference type="RefSeq" id="WP_011469187.1">
    <property type="nucleotide sequence ID" value="NC_007912.1"/>
</dbReference>
<dbReference type="SMR" id="Q21H59"/>
<dbReference type="STRING" id="203122.Sde_2710"/>
<dbReference type="GeneID" id="98614367"/>
<dbReference type="KEGG" id="sde:Sde_2710"/>
<dbReference type="eggNOG" id="COG0779">
    <property type="taxonomic scope" value="Bacteria"/>
</dbReference>
<dbReference type="HOGENOM" id="CLU_070525_1_1_6"/>
<dbReference type="OrthoDB" id="9805006at2"/>
<dbReference type="Proteomes" id="UP000001947">
    <property type="component" value="Chromosome"/>
</dbReference>
<dbReference type="GO" id="GO:0005829">
    <property type="term" value="C:cytosol"/>
    <property type="evidence" value="ECO:0007669"/>
    <property type="project" value="TreeGrafter"/>
</dbReference>
<dbReference type="GO" id="GO:0000028">
    <property type="term" value="P:ribosomal small subunit assembly"/>
    <property type="evidence" value="ECO:0007669"/>
    <property type="project" value="TreeGrafter"/>
</dbReference>
<dbReference type="GO" id="GO:0006412">
    <property type="term" value="P:translation"/>
    <property type="evidence" value="ECO:0007669"/>
    <property type="project" value="TreeGrafter"/>
</dbReference>
<dbReference type="CDD" id="cd01734">
    <property type="entry name" value="YlxS_C"/>
    <property type="match status" value="1"/>
</dbReference>
<dbReference type="FunFam" id="3.30.300.70:FF:000001">
    <property type="entry name" value="Ribosome maturation factor RimP"/>
    <property type="match status" value="1"/>
</dbReference>
<dbReference type="Gene3D" id="2.30.30.180">
    <property type="entry name" value="Ribosome maturation factor RimP, C-terminal domain"/>
    <property type="match status" value="1"/>
</dbReference>
<dbReference type="Gene3D" id="3.30.300.70">
    <property type="entry name" value="RimP-like superfamily, N-terminal"/>
    <property type="match status" value="1"/>
</dbReference>
<dbReference type="HAMAP" id="MF_01077">
    <property type="entry name" value="RimP"/>
    <property type="match status" value="1"/>
</dbReference>
<dbReference type="InterPro" id="IPR003728">
    <property type="entry name" value="Ribosome_maturation_RimP"/>
</dbReference>
<dbReference type="InterPro" id="IPR028998">
    <property type="entry name" value="RimP_C"/>
</dbReference>
<dbReference type="InterPro" id="IPR036847">
    <property type="entry name" value="RimP_C_sf"/>
</dbReference>
<dbReference type="InterPro" id="IPR028989">
    <property type="entry name" value="RimP_N"/>
</dbReference>
<dbReference type="InterPro" id="IPR035956">
    <property type="entry name" value="RimP_N_sf"/>
</dbReference>
<dbReference type="NCBIfam" id="NF000927">
    <property type="entry name" value="PRK00092.1-1"/>
    <property type="match status" value="1"/>
</dbReference>
<dbReference type="PANTHER" id="PTHR33867">
    <property type="entry name" value="RIBOSOME MATURATION FACTOR RIMP"/>
    <property type="match status" value="1"/>
</dbReference>
<dbReference type="PANTHER" id="PTHR33867:SF1">
    <property type="entry name" value="RIBOSOME MATURATION FACTOR RIMP"/>
    <property type="match status" value="1"/>
</dbReference>
<dbReference type="Pfam" id="PF17384">
    <property type="entry name" value="DUF150_C"/>
    <property type="match status" value="1"/>
</dbReference>
<dbReference type="Pfam" id="PF02576">
    <property type="entry name" value="RimP_N"/>
    <property type="match status" value="1"/>
</dbReference>
<dbReference type="SUPFAM" id="SSF74942">
    <property type="entry name" value="YhbC-like, C-terminal domain"/>
    <property type="match status" value="1"/>
</dbReference>
<dbReference type="SUPFAM" id="SSF75420">
    <property type="entry name" value="YhbC-like, N-terminal domain"/>
    <property type="match status" value="1"/>
</dbReference>
<comment type="function">
    <text evidence="1">Required for maturation of 30S ribosomal subunits.</text>
</comment>
<comment type="subcellular location">
    <subcellularLocation>
        <location evidence="1">Cytoplasm</location>
    </subcellularLocation>
</comment>
<comment type="similarity">
    <text evidence="1">Belongs to the RimP family.</text>
</comment>
<name>RIMP_SACD2</name>
<gene>
    <name evidence="1" type="primary">rimP</name>
    <name type="ordered locus">Sde_2710</name>
</gene>
<proteinExistence type="inferred from homology"/>
<keyword id="KW-0963">Cytoplasm</keyword>
<keyword id="KW-1185">Reference proteome</keyword>
<keyword id="KW-0690">Ribosome biogenesis</keyword>
<accession>Q21H59</accession>
<reference key="1">
    <citation type="journal article" date="2008" name="PLoS Genet.">
        <title>Complete genome sequence of the complex carbohydrate-degrading marine bacterium, Saccharophagus degradans strain 2-40 T.</title>
        <authorList>
            <person name="Weiner R.M."/>
            <person name="Taylor L.E. II"/>
            <person name="Henrissat B."/>
            <person name="Hauser L."/>
            <person name="Land M."/>
            <person name="Coutinho P.M."/>
            <person name="Rancurel C."/>
            <person name="Saunders E.H."/>
            <person name="Longmire A.G."/>
            <person name="Zhang H."/>
            <person name="Bayer E.A."/>
            <person name="Gilbert H.J."/>
            <person name="Larimer F."/>
            <person name="Zhulin I.B."/>
            <person name="Ekborg N.A."/>
            <person name="Lamed R."/>
            <person name="Richardson P.M."/>
            <person name="Borovok I."/>
            <person name="Hutcheson S."/>
        </authorList>
    </citation>
    <scope>NUCLEOTIDE SEQUENCE [LARGE SCALE GENOMIC DNA]</scope>
    <source>
        <strain>2-40 / ATCC 43961 / DSM 17024</strain>
    </source>
</reference>
<sequence length="151" mass="17020">MAGKETRLEKMLAPVVESLGCEFWGLELRMQGKQSLLRIFIEKEAGVGVEDCENVSRQVSAVLDVEDPISGEYTLEVSSPGMDRPLFTLDHFTRFVGEHVSLRLRTAFDGRRNFSGKLTAVEDDEVILLIDAEEYILPFELIDKAQVVPKF</sequence>